<reference key="1">
    <citation type="journal article" date="2002" name="Nature">
        <title>The genome sequence of Schizosaccharomyces pombe.</title>
        <authorList>
            <person name="Wood V."/>
            <person name="Gwilliam R."/>
            <person name="Rajandream M.A."/>
            <person name="Lyne M.H."/>
            <person name="Lyne R."/>
            <person name="Stewart A."/>
            <person name="Sgouros J.G."/>
            <person name="Peat N."/>
            <person name="Hayles J."/>
            <person name="Baker S.G."/>
            <person name="Basham D."/>
            <person name="Bowman S."/>
            <person name="Brooks K."/>
            <person name="Brown D."/>
            <person name="Brown S."/>
            <person name="Chillingworth T."/>
            <person name="Churcher C.M."/>
            <person name="Collins M."/>
            <person name="Connor R."/>
            <person name="Cronin A."/>
            <person name="Davis P."/>
            <person name="Feltwell T."/>
            <person name="Fraser A."/>
            <person name="Gentles S."/>
            <person name="Goble A."/>
            <person name="Hamlin N."/>
            <person name="Harris D.E."/>
            <person name="Hidalgo J."/>
            <person name="Hodgson G."/>
            <person name="Holroyd S."/>
            <person name="Hornsby T."/>
            <person name="Howarth S."/>
            <person name="Huckle E.J."/>
            <person name="Hunt S."/>
            <person name="Jagels K."/>
            <person name="James K.D."/>
            <person name="Jones L."/>
            <person name="Jones M."/>
            <person name="Leather S."/>
            <person name="McDonald S."/>
            <person name="McLean J."/>
            <person name="Mooney P."/>
            <person name="Moule S."/>
            <person name="Mungall K.L."/>
            <person name="Murphy L.D."/>
            <person name="Niblett D."/>
            <person name="Odell C."/>
            <person name="Oliver K."/>
            <person name="O'Neil S."/>
            <person name="Pearson D."/>
            <person name="Quail M.A."/>
            <person name="Rabbinowitsch E."/>
            <person name="Rutherford K.M."/>
            <person name="Rutter S."/>
            <person name="Saunders D."/>
            <person name="Seeger K."/>
            <person name="Sharp S."/>
            <person name="Skelton J."/>
            <person name="Simmonds M.N."/>
            <person name="Squares R."/>
            <person name="Squares S."/>
            <person name="Stevens K."/>
            <person name="Taylor K."/>
            <person name="Taylor R.G."/>
            <person name="Tivey A."/>
            <person name="Walsh S.V."/>
            <person name="Warren T."/>
            <person name="Whitehead S."/>
            <person name="Woodward J.R."/>
            <person name="Volckaert G."/>
            <person name="Aert R."/>
            <person name="Robben J."/>
            <person name="Grymonprez B."/>
            <person name="Weltjens I."/>
            <person name="Vanstreels E."/>
            <person name="Rieger M."/>
            <person name="Schaefer M."/>
            <person name="Mueller-Auer S."/>
            <person name="Gabel C."/>
            <person name="Fuchs M."/>
            <person name="Duesterhoeft A."/>
            <person name="Fritzc C."/>
            <person name="Holzer E."/>
            <person name="Moestl D."/>
            <person name="Hilbert H."/>
            <person name="Borzym K."/>
            <person name="Langer I."/>
            <person name="Beck A."/>
            <person name="Lehrach H."/>
            <person name="Reinhardt R."/>
            <person name="Pohl T.M."/>
            <person name="Eger P."/>
            <person name="Zimmermann W."/>
            <person name="Wedler H."/>
            <person name="Wambutt R."/>
            <person name="Purnelle B."/>
            <person name="Goffeau A."/>
            <person name="Cadieu E."/>
            <person name="Dreano S."/>
            <person name="Gloux S."/>
            <person name="Lelaure V."/>
            <person name="Mottier S."/>
            <person name="Galibert F."/>
            <person name="Aves S.J."/>
            <person name="Xiang Z."/>
            <person name="Hunt C."/>
            <person name="Moore K."/>
            <person name="Hurst S.M."/>
            <person name="Lucas M."/>
            <person name="Rochet M."/>
            <person name="Gaillardin C."/>
            <person name="Tallada V.A."/>
            <person name="Garzon A."/>
            <person name="Thode G."/>
            <person name="Daga R.R."/>
            <person name="Cruzado L."/>
            <person name="Jimenez J."/>
            <person name="Sanchez M."/>
            <person name="del Rey F."/>
            <person name="Benito J."/>
            <person name="Dominguez A."/>
            <person name="Revuelta J.L."/>
            <person name="Moreno S."/>
            <person name="Armstrong J."/>
            <person name="Forsburg S.L."/>
            <person name="Cerutti L."/>
            <person name="Lowe T."/>
            <person name="McCombie W.R."/>
            <person name="Paulsen I."/>
            <person name="Potashkin J."/>
            <person name="Shpakovski G.V."/>
            <person name="Ussery D."/>
            <person name="Barrell B.G."/>
            <person name="Nurse P."/>
        </authorList>
    </citation>
    <scope>NUCLEOTIDE SEQUENCE [LARGE SCALE GENOMIC DNA]</scope>
    <source>
        <strain>972 / ATCC 24843</strain>
    </source>
</reference>
<reference key="2">
    <citation type="journal article" date="2011" name="Science">
        <title>Comparative functional genomics of the fission yeasts.</title>
        <authorList>
            <person name="Rhind N."/>
            <person name="Chen Z."/>
            <person name="Yassour M."/>
            <person name="Thompson D.A."/>
            <person name="Haas B.J."/>
            <person name="Habib N."/>
            <person name="Wapinski I."/>
            <person name="Roy S."/>
            <person name="Lin M.F."/>
            <person name="Heiman D.I."/>
            <person name="Young S.K."/>
            <person name="Furuya K."/>
            <person name="Guo Y."/>
            <person name="Pidoux A."/>
            <person name="Chen H.M."/>
            <person name="Robbertse B."/>
            <person name="Goldberg J.M."/>
            <person name="Aoki K."/>
            <person name="Bayne E.H."/>
            <person name="Berlin A.M."/>
            <person name="Desjardins C.A."/>
            <person name="Dobbs E."/>
            <person name="Dukaj L."/>
            <person name="Fan L."/>
            <person name="FitzGerald M.G."/>
            <person name="French C."/>
            <person name="Gujja S."/>
            <person name="Hansen K."/>
            <person name="Keifenheim D."/>
            <person name="Levin J.Z."/>
            <person name="Mosher R.A."/>
            <person name="Mueller C.A."/>
            <person name="Pfiffner J."/>
            <person name="Priest M."/>
            <person name="Russ C."/>
            <person name="Smialowska A."/>
            <person name="Swoboda P."/>
            <person name="Sykes S.M."/>
            <person name="Vaughn M."/>
            <person name="Vengrova S."/>
            <person name="Yoder R."/>
            <person name="Zeng Q."/>
            <person name="Allshire R."/>
            <person name="Baulcombe D."/>
            <person name="Birren B.W."/>
            <person name="Brown W."/>
            <person name="Ekwall K."/>
            <person name="Kellis M."/>
            <person name="Leatherwood J."/>
            <person name="Levin H."/>
            <person name="Margalit H."/>
            <person name="Martienssen R."/>
            <person name="Nieduszynski C.A."/>
            <person name="Spatafora J.W."/>
            <person name="Friedman N."/>
            <person name="Dalgaard J.Z."/>
            <person name="Baumann P."/>
            <person name="Niki H."/>
            <person name="Regev A."/>
            <person name="Nusbaum C."/>
        </authorList>
    </citation>
    <scope>REVISION OF GENE MODEL</scope>
</reference>
<reference key="3">
    <citation type="journal article" date="1997" name="DNA Res.">
        <title>Identification of open reading frames in Schizosaccharomyces pombe cDNAs.</title>
        <authorList>
            <person name="Yoshioka S."/>
            <person name="Kato K."/>
            <person name="Nakai K."/>
            <person name="Okayama H."/>
            <person name="Nojima H."/>
        </authorList>
    </citation>
    <scope>NUCLEOTIDE SEQUENCE [LARGE SCALE MRNA] OF 330-836</scope>
    <source>
        <strain>PR745</strain>
    </source>
</reference>
<reference key="4">
    <citation type="journal article" date="2004" name="Genes Cells">
        <title>Sorting nexin homologues are targets of phosphatidylinositol 3-phosphate in sporulation of Schizosaccharomyces pombe.</title>
        <authorList>
            <person name="Koga T."/>
            <person name="Onishi M."/>
            <person name="Nakamura Y."/>
            <person name="Hirata A."/>
            <person name="Nakamura T."/>
            <person name="Shimoda C."/>
            <person name="Iwaki T."/>
            <person name="Takegawa K."/>
            <person name="Fukui Y."/>
        </authorList>
    </citation>
    <scope>FUNCTION</scope>
</reference>
<reference key="5">
    <citation type="journal article" date="2006" name="Microbiology">
        <title>Vacuolar protein sorting receptor in Schizosaccharomyces pombe.</title>
        <authorList>
            <person name="Iwaki T."/>
            <person name="Hosomi A."/>
            <person name="Tokudomi S."/>
            <person name="Kusunoki Y."/>
            <person name="Fujita Y."/>
            <person name="Giga-Hama Y."/>
            <person name="Tanaka N."/>
            <person name="Takegawa K."/>
        </authorList>
    </citation>
    <scope>FUNCTION</scope>
</reference>
<reference key="6">
    <citation type="journal article" date="2006" name="Nat. Biotechnol.">
        <title>ORFeome cloning and global analysis of protein localization in the fission yeast Schizosaccharomyces pombe.</title>
        <authorList>
            <person name="Matsuyama A."/>
            <person name="Arai R."/>
            <person name="Yashiroda Y."/>
            <person name="Shirai A."/>
            <person name="Kamata A."/>
            <person name="Sekido S."/>
            <person name="Kobayashi Y."/>
            <person name="Hashimoto A."/>
            <person name="Hamamoto M."/>
            <person name="Hiraoka Y."/>
            <person name="Horinouchi S."/>
            <person name="Yoshida M."/>
        </authorList>
    </citation>
    <scope>SUBCELLULAR LOCATION [LARGE SCALE ANALYSIS]</scope>
</reference>
<reference key="7">
    <citation type="journal article" date="2008" name="J. Proteome Res.">
        <title>Phosphoproteome analysis of fission yeast.</title>
        <authorList>
            <person name="Wilson-Grady J.T."/>
            <person name="Villen J."/>
            <person name="Gygi S.P."/>
        </authorList>
    </citation>
    <scope>PHOSPHORYLATION [LARGE SCALE ANALYSIS] AT SER-316; SER-318 AND SER-783</scope>
    <scope>IDENTIFICATION BY MASS SPECTROMETRY</scope>
</reference>
<reference key="8">
    <citation type="journal article" date="2010" name="Genome Biol.">
        <title>Global fitness profiling of fission yeast deletion strains by barcode sequencing.</title>
        <authorList>
            <person name="Han T.X."/>
            <person name="Xu X.Y."/>
            <person name="Zhang M.J."/>
            <person name="Peng X."/>
            <person name="Du L.L."/>
        </authorList>
    </citation>
    <scope>DISRUPTION PHENOTYPE</scope>
</reference>
<evidence type="ECO:0000250" key="1"/>
<evidence type="ECO:0000269" key="2">
    <source>
    </source>
</evidence>
<evidence type="ECO:0000269" key="3">
    <source>
    </source>
</evidence>
<evidence type="ECO:0000269" key="4">
    <source>
    </source>
</evidence>
<evidence type="ECO:0000269" key="5">
    <source>
    </source>
</evidence>
<evidence type="ECO:0000305" key="6"/>
<dbReference type="EMBL" id="CU329672">
    <property type="protein sequence ID" value="CAA20717.2"/>
    <property type="molecule type" value="Genomic_DNA"/>
</dbReference>
<dbReference type="EMBL" id="D89178">
    <property type="protein sequence ID" value="BAA13840.1"/>
    <property type="molecule type" value="mRNA"/>
</dbReference>
<dbReference type="PIR" id="T11719">
    <property type="entry name" value="T11719"/>
</dbReference>
<dbReference type="RefSeq" id="NP_588260.2">
    <property type="nucleotide sequence ID" value="NM_001023250.2"/>
</dbReference>
<dbReference type="SMR" id="O74552"/>
<dbReference type="BioGRID" id="276025">
    <property type="interactions" value="288"/>
</dbReference>
<dbReference type="FunCoup" id="O74552">
    <property type="interactions" value="878"/>
</dbReference>
<dbReference type="STRING" id="284812.O74552"/>
<dbReference type="iPTMnet" id="O74552"/>
<dbReference type="PaxDb" id="4896-SPCC777.13.1"/>
<dbReference type="EnsemblFungi" id="SPCC777.13.1">
    <property type="protein sequence ID" value="SPCC777.13.1:pep"/>
    <property type="gene ID" value="SPCC777.13"/>
</dbReference>
<dbReference type="GeneID" id="2539462"/>
<dbReference type="KEGG" id="spo:2539462"/>
<dbReference type="PomBase" id="SPCC777.13">
    <property type="gene designation" value="vps35"/>
</dbReference>
<dbReference type="VEuPathDB" id="FungiDB:SPCC777.13"/>
<dbReference type="eggNOG" id="KOG1107">
    <property type="taxonomic scope" value="Eukaryota"/>
</dbReference>
<dbReference type="HOGENOM" id="CLU_005836_0_0_1"/>
<dbReference type="InParanoid" id="O74552"/>
<dbReference type="OMA" id="YIRSREY"/>
<dbReference type="Reactome" id="R-SPO-3238698">
    <property type="pathway name" value="WNT ligand biogenesis and trafficking"/>
</dbReference>
<dbReference type="PRO" id="PR:O74552"/>
<dbReference type="Proteomes" id="UP000002485">
    <property type="component" value="Chromosome III"/>
</dbReference>
<dbReference type="GO" id="GO:0005829">
    <property type="term" value="C:cytosol"/>
    <property type="evidence" value="ECO:0007005"/>
    <property type="project" value="PomBase"/>
</dbReference>
<dbReference type="GO" id="GO:0005768">
    <property type="term" value="C:endosome"/>
    <property type="evidence" value="ECO:0000315"/>
    <property type="project" value="PomBase"/>
</dbReference>
<dbReference type="GO" id="GO:0005770">
    <property type="term" value="C:late endosome"/>
    <property type="evidence" value="ECO:0000318"/>
    <property type="project" value="GO_Central"/>
</dbReference>
<dbReference type="GO" id="GO:0030904">
    <property type="term" value="C:retromer complex"/>
    <property type="evidence" value="ECO:0000315"/>
    <property type="project" value="PomBase"/>
</dbReference>
<dbReference type="GO" id="GO:0030906">
    <property type="term" value="C:retromer, cargo-selective complex"/>
    <property type="evidence" value="ECO:0007669"/>
    <property type="project" value="InterPro"/>
</dbReference>
<dbReference type="GO" id="GO:0006886">
    <property type="term" value="P:intracellular protein transport"/>
    <property type="evidence" value="ECO:0000315"/>
    <property type="project" value="PomBase"/>
</dbReference>
<dbReference type="GO" id="GO:0042147">
    <property type="term" value="P:retrograde transport, endosome to Golgi"/>
    <property type="evidence" value="ECO:0000315"/>
    <property type="project" value="PomBase"/>
</dbReference>
<dbReference type="FunFam" id="1.25.40.660:FF:000016">
    <property type="entry name" value="Vacuolar protein sorting-associated protein 35"/>
    <property type="match status" value="1"/>
</dbReference>
<dbReference type="Gene3D" id="1.25.40.660">
    <property type="entry name" value="Vacuolar protein sorting-associated protein 35, helical subcomplex Vps35-C"/>
    <property type="match status" value="1"/>
</dbReference>
<dbReference type="InterPro" id="IPR005378">
    <property type="entry name" value="Vps35"/>
</dbReference>
<dbReference type="InterPro" id="IPR042491">
    <property type="entry name" value="Vps35_C"/>
</dbReference>
<dbReference type="PANTHER" id="PTHR11099:SF0">
    <property type="entry name" value="VACUOLAR PROTEIN SORTING-ASSOCIATED PROTEIN 35"/>
    <property type="match status" value="1"/>
</dbReference>
<dbReference type="PANTHER" id="PTHR11099">
    <property type="entry name" value="VACUOLAR SORTING PROTEIN 35"/>
    <property type="match status" value="1"/>
</dbReference>
<dbReference type="Pfam" id="PF03635">
    <property type="entry name" value="Vps35"/>
    <property type="match status" value="1"/>
</dbReference>
<dbReference type="PIRSF" id="PIRSF009375">
    <property type="entry name" value="Retromer_Vps35"/>
    <property type="match status" value="1"/>
</dbReference>
<accession>O74552</accession>
<accession>P78830</accession>
<name>VPS35_SCHPO</name>
<comment type="function">
    <text evidence="2 3">Plays a role in vesicular protein sorting. Required for the endosome-to-Golgi retrieval of the vacuolar protein sorting receptor vps10. Required to form proper forespore membranes.</text>
</comment>
<comment type="subunit">
    <text evidence="1">Component of the retromer complex.</text>
</comment>
<comment type="subcellular location">
    <subcellularLocation>
        <location evidence="1">Membrane</location>
        <topology evidence="1">Peripheral membrane protein</topology>
    </subcellularLocation>
</comment>
<comment type="disruption phenotype">
    <text evidence="5">Leads to sensitivity to thiabendazole and microtubule depolymerizing drugs.</text>
</comment>
<comment type="similarity">
    <text evidence="6">Belongs to the VPS35 family.</text>
</comment>
<gene>
    <name type="primary">vps35</name>
    <name type="ORF">SPCC777.13</name>
</gene>
<feature type="chain" id="PRO_0000065898" description="Vacuolar protein sorting-associated protein 35">
    <location>
        <begin position="1"/>
        <end position="836"/>
    </location>
</feature>
<feature type="modified residue" description="Phosphoserine" evidence="4">
    <location>
        <position position="316"/>
    </location>
</feature>
<feature type="modified residue" description="Phosphoserine" evidence="4">
    <location>
        <position position="318"/>
    </location>
</feature>
<feature type="modified residue" description="Phosphoserine" evidence="4">
    <location>
        <position position="783"/>
    </location>
</feature>
<feature type="sequence conflict" description="In Ref. 3; BAA13840." evidence="6" ref="3">
    <original>S</original>
    <variation>P</variation>
    <location>
        <position position="388"/>
    </location>
</feature>
<protein>
    <recommendedName>
        <fullName>Vacuolar protein sorting-associated protein 35</fullName>
    </recommendedName>
</protein>
<keyword id="KW-0472">Membrane</keyword>
<keyword id="KW-0597">Phosphoprotein</keyword>
<keyword id="KW-0653">Protein transport</keyword>
<keyword id="KW-1185">Reference proteome</keyword>
<keyword id="KW-0813">Transport</keyword>
<proteinExistence type="evidence at protein level"/>
<sequence length="836" mass="96408">MNGINTANEEITRSLEESLNICKQSSRLMQRNLQTGRLMDAFRNCSISLVEMRNSALTPKQYYELYMFNMESLRLLGGTLLETHLNGTHNLMDLYELVQYAGSIVPRLYLMITVGSAYLETPNALVREIMNDLLDMCRGVQHPLRGLFLRHYLLTQTRKGLPLGSEDEEDASRKGTVLDSVKFLVINFTEMNKLWVRIQHLGPIKEFSKRTQERNELKVLVGLNLVRLSQLNLDIDTYRDHVLPAIIEQIIECRDSLAQEYLVEVICQAFSDNMHLQTLDTYFGTVIKLSPSVNVTQLVVAMLNRLTDYVQREYESDSSNEDESETVTEKLGDIKINEEVQQKDEQECPGDKVIPPEYAIQEVLWSHVVEVIQSRSGLPLDCIVSILSSILNFFLRCYPYKPQYADRVFQYINEHIINQPSLRSALHERPLQKSLCAILLLPLTYFPSFSYCLELQNFLPVFNAQDPNLRYDIARMIVQKIIEKGHSLSELTEAQELLGFVSVIIEKKGVDSLDDLQNVALMVHYLNNDDPQIQIEILRSLKDTFIKAGENVKYLLPVVVNRCIFLARNFRIFKCMDWAEKVRLLWEFVNTCINVLYKNGDSLELCLALYLSAAEMADQENYPDFAYEFFTQAFSIYEESVLDSELQYQQLLMIIGKLQKTRNFSVDDYDTLITKCTLYASKLLKKPDQCCGIYLASHLWWQVASGEDSRPFQDPKRVLECLQKSLKIADACMDQLTSLKLFINILERYFYYYDQHCESIIAKHISGLIDLTEQNMRSILISSPADLIASDPRAYASSIWEVANVSVIDSLKNHLERATAYAEKRSEDERWSSIFQ</sequence>
<organism>
    <name type="scientific">Schizosaccharomyces pombe (strain 972 / ATCC 24843)</name>
    <name type="common">Fission yeast</name>
    <dbReference type="NCBI Taxonomy" id="284812"/>
    <lineage>
        <taxon>Eukaryota</taxon>
        <taxon>Fungi</taxon>
        <taxon>Dikarya</taxon>
        <taxon>Ascomycota</taxon>
        <taxon>Taphrinomycotina</taxon>
        <taxon>Schizosaccharomycetes</taxon>
        <taxon>Schizosaccharomycetales</taxon>
        <taxon>Schizosaccharomycetaceae</taxon>
        <taxon>Schizosaccharomyces</taxon>
    </lineage>
</organism>